<reference key="1">
    <citation type="submission" date="2008-10" db="EMBL/GenBank/DDBJ databases">
        <title>Genome sequence of Bacillus cereus AH187.</title>
        <authorList>
            <person name="Dodson R.J."/>
            <person name="Durkin A.S."/>
            <person name="Rosovitz M.J."/>
            <person name="Rasko D.A."/>
            <person name="Kolsto A.B."/>
            <person name="Okstad O.A."/>
            <person name="Ravel J."/>
            <person name="Sutton G."/>
        </authorList>
    </citation>
    <scope>NUCLEOTIDE SEQUENCE [LARGE SCALE GENOMIC DNA]</scope>
    <source>
        <strain>AH187</strain>
    </source>
</reference>
<feature type="chain" id="PRO_0000383968" description="Lactate utilization protein B">
    <location>
        <begin position="1"/>
        <end position="473"/>
    </location>
</feature>
<feature type="domain" description="4Fe-4S ferredoxin-type 1" evidence="1">
    <location>
        <begin position="302"/>
        <end position="332"/>
    </location>
</feature>
<feature type="domain" description="4Fe-4S ferredoxin-type 2" evidence="1">
    <location>
        <begin position="351"/>
        <end position="380"/>
    </location>
</feature>
<feature type="binding site" evidence="1">
    <location>
        <position position="311"/>
    </location>
    <ligand>
        <name>[4Fe-4S] cluster</name>
        <dbReference type="ChEBI" id="CHEBI:49883"/>
        <label>1</label>
    </ligand>
</feature>
<feature type="binding site" evidence="1">
    <location>
        <position position="314"/>
    </location>
    <ligand>
        <name>[4Fe-4S] cluster</name>
        <dbReference type="ChEBI" id="CHEBI:49883"/>
        <label>1</label>
    </ligand>
</feature>
<feature type="binding site" evidence="1">
    <location>
        <position position="317"/>
    </location>
    <ligand>
        <name>[4Fe-4S] cluster</name>
        <dbReference type="ChEBI" id="CHEBI:49883"/>
        <label>1</label>
    </ligand>
</feature>
<feature type="binding site" evidence="1">
    <location>
        <position position="321"/>
    </location>
    <ligand>
        <name>[4Fe-4S] cluster</name>
        <dbReference type="ChEBI" id="CHEBI:49883"/>
        <label>2</label>
    </ligand>
</feature>
<feature type="binding site" evidence="1">
    <location>
        <position position="364"/>
    </location>
    <ligand>
        <name>[4Fe-4S] cluster</name>
        <dbReference type="ChEBI" id="CHEBI:49883"/>
        <label>2</label>
    </ligand>
</feature>
<feature type="binding site" evidence="1">
    <location>
        <position position="367"/>
    </location>
    <ligand>
        <name>[4Fe-4S] cluster</name>
        <dbReference type="ChEBI" id="CHEBI:49883"/>
        <label>2</label>
    </ligand>
</feature>
<feature type="binding site" evidence="1">
    <location>
        <position position="371"/>
    </location>
    <ligand>
        <name>[4Fe-4S] cluster</name>
        <dbReference type="ChEBI" id="CHEBI:49883"/>
        <label>1</label>
    </ligand>
</feature>
<proteinExistence type="inferred from homology"/>
<keyword id="KW-0004">4Fe-4S</keyword>
<keyword id="KW-0249">Electron transport</keyword>
<keyword id="KW-0408">Iron</keyword>
<keyword id="KW-0411">Iron-sulfur</keyword>
<keyword id="KW-0479">Metal-binding</keyword>
<keyword id="KW-0677">Repeat</keyword>
<keyword id="KW-0813">Transport</keyword>
<gene>
    <name evidence="1" type="primary">lutB</name>
    <name type="ordered locus">BCAH187_A1457</name>
</gene>
<dbReference type="EMBL" id="CP001177">
    <property type="protein sequence ID" value="ACJ79841.1"/>
    <property type="molecule type" value="Genomic_DNA"/>
</dbReference>
<dbReference type="KEGG" id="bcr:BCAH187_A1457"/>
<dbReference type="HOGENOM" id="CLU_027059_2_0_9"/>
<dbReference type="Proteomes" id="UP000002214">
    <property type="component" value="Chromosome"/>
</dbReference>
<dbReference type="GO" id="GO:0051539">
    <property type="term" value="F:4 iron, 4 sulfur cluster binding"/>
    <property type="evidence" value="ECO:0007669"/>
    <property type="project" value="UniProtKB-KW"/>
</dbReference>
<dbReference type="GO" id="GO:0046872">
    <property type="term" value="F:metal ion binding"/>
    <property type="evidence" value="ECO:0007669"/>
    <property type="project" value="UniProtKB-KW"/>
</dbReference>
<dbReference type="GO" id="GO:0006089">
    <property type="term" value="P:lactate metabolic process"/>
    <property type="evidence" value="ECO:0007669"/>
    <property type="project" value="UniProtKB-UniRule"/>
</dbReference>
<dbReference type="Gene3D" id="1.10.1060.10">
    <property type="entry name" value="Alpha-helical ferredoxin"/>
    <property type="match status" value="1"/>
</dbReference>
<dbReference type="Gene3D" id="3.40.50.10420">
    <property type="entry name" value="NagB/RpiA/CoA transferase-like"/>
    <property type="match status" value="1"/>
</dbReference>
<dbReference type="HAMAP" id="MF_02103">
    <property type="entry name" value="LutB"/>
    <property type="match status" value="1"/>
</dbReference>
<dbReference type="InterPro" id="IPR017896">
    <property type="entry name" value="4Fe4S_Fe-S-bd"/>
</dbReference>
<dbReference type="InterPro" id="IPR017900">
    <property type="entry name" value="4Fe4S_Fe_S_CS"/>
</dbReference>
<dbReference type="InterPro" id="IPR024185">
    <property type="entry name" value="FTHF_cligase-like_sf"/>
</dbReference>
<dbReference type="InterPro" id="IPR009051">
    <property type="entry name" value="Helical_ferredxn"/>
</dbReference>
<dbReference type="InterPro" id="IPR003741">
    <property type="entry name" value="LUD_dom"/>
</dbReference>
<dbReference type="InterPro" id="IPR022825">
    <property type="entry name" value="LutB"/>
</dbReference>
<dbReference type="InterPro" id="IPR004452">
    <property type="entry name" value="LutB/LldF"/>
</dbReference>
<dbReference type="InterPro" id="IPR024569">
    <property type="entry name" value="LutB_C"/>
</dbReference>
<dbReference type="InterPro" id="IPR037171">
    <property type="entry name" value="NagB/RpiA_transferase-like"/>
</dbReference>
<dbReference type="NCBIfam" id="TIGR00273">
    <property type="entry name" value="LutB/LldF family L-lactate oxidation iron-sulfur protein"/>
    <property type="match status" value="1"/>
</dbReference>
<dbReference type="PANTHER" id="PTHR47153">
    <property type="entry name" value="LACTATE UTILIZATION PROTEIN B"/>
    <property type="match status" value="1"/>
</dbReference>
<dbReference type="PANTHER" id="PTHR47153:SF2">
    <property type="entry name" value="LACTATE UTILIZATION PROTEIN B"/>
    <property type="match status" value="1"/>
</dbReference>
<dbReference type="Pfam" id="PF13183">
    <property type="entry name" value="Fer4_8"/>
    <property type="match status" value="1"/>
</dbReference>
<dbReference type="Pfam" id="PF02589">
    <property type="entry name" value="LUD_dom"/>
    <property type="match status" value="1"/>
</dbReference>
<dbReference type="Pfam" id="PF11870">
    <property type="entry name" value="LutB_C"/>
    <property type="match status" value="1"/>
</dbReference>
<dbReference type="SUPFAM" id="SSF46548">
    <property type="entry name" value="alpha-helical ferredoxin"/>
    <property type="match status" value="1"/>
</dbReference>
<dbReference type="SUPFAM" id="SSF100950">
    <property type="entry name" value="NagB/RpiA/CoA transferase-like"/>
    <property type="match status" value="1"/>
</dbReference>
<dbReference type="PROSITE" id="PS00198">
    <property type="entry name" value="4FE4S_FER_1"/>
    <property type="match status" value="1"/>
</dbReference>
<comment type="function">
    <text evidence="1">Is involved in L-lactate degradation and allows cells to grow with lactate as the sole carbon source. Has probably a role as an electron transporter during oxidation of L-lactate.</text>
</comment>
<comment type="similarity">
    <text evidence="1">Belongs to the LutB/YkgF family.</text>
</comment>
<evidence type="ECO:0000255" key="1">
    <source>
        <dbReference type="HAMAP-Rule" id="MF_02103"/>
    </source>
</evidence>
<sequence length="473" mass="52669">MSMKISEKKFNDRVGDGIQDSFMRGAVSSAQTRLYTNRLKAADELGNWEEWRELGEEIRQHTLENLDYYLMQLSENVSKRGGHVYFAKTKEEAAKYIQDVAKKKQAKKVVKSKSMVTEEISMNHALEEIGCEVLESDLGEYILQVDNDPPSHIIAPALHKNRTQIRDVFKEKLGYENSDDPYEMTKFVRKQLREKFMDAEIGVTGCNFAVANTGSLCLVTNEGNADLVMSIPKTQIAVMGMERMVPTMEELDVLVGLLCRSAVGQKLTSYVTVAGPIQEEEVDGPEEFHLVVVDNGRSQILGSEFRQVLQCIRCAACVNVCPVYRHVGGHSYGSIYSGPIGAVLTPLLGGYDDYKELPYASSLCGACTEACPVKIPLHDLLLKHRQVIVEQEGRAPLAEKLAMKMFSMGASSAALYKMGSKMAPAAMSPFTSGNRVSKGVGPLKNWTDIREFPAPSKERFRDWYKDHKKGGDK</sequence>
<accession>B7I0L0</accession>
<organism>
    <name type="scientific">Bacillus cereus (strain AH187)</name>
    <dbReference type="NCBI Taxonomy" id="405534"/>
    <lineage>
        <taxon>Bacteria</taxon>
        <taxon>Bacillati</taxon>
        <taxon>Bacillota</taxon>
        <taxon>Bacilli</taxon>
        <taxon>Bacillales</taxon>
        <taxon>Bacillaceae</taxon>
        <taxon>Bacillus</taxon>
        <taxon>Bacillus cereus group</taxon>
    </lineage>
</organism>
<name>LUTB_BACC7</name>
<protein>
    <recommendedName>
        <fullName evidence="1">Lactate utilization protein B</fullName>
    </recommendedName>
</protein>